<evidence type="ECO:0000255" key="1">
    <source>
        <dbReference type="HAMAP-Rule" id="MF_01595"/>
    </source>
</evidence>
<sequence>MSLFNVFRKEIEWGGRKLVLETGRIARQADGAVMASLGDTTVLCTAVGAKTKSKFDFFPLTVNYQEKTFAAGKIPGGFFKREGRPSEKETLVSRLIDRPIRPLFVHGYKNETQLVCTVLCHDLENNPDIVAIVGASAALTLSGLPFLGPIGAARVGLIDGAFVLNPTRDQMADSVLDLVVAGTREGVLMVESEAHELSEQQMLDAVMFGHEGYQPVIDAIIALAEQCAREPRAIEPPAPEAEAVAAKVREVGEAGLRDAYKEADKMVRHDKVDAVRDAVTAAFAGDDAALALAGAAFKDLEKDIVRGSILDTGLRIDGRDTKTVRPIEIYPGILPRAHGSALFTRGETQALVTTTLGTGQDEQIIDALEGEYRENFMLHYNFPPYSVGEAGRMGSPGRREIGHGKLAWRAIHPMMPAKDAFPYTVRVVSEITESNGSSSMATVCGTSLALMDAGVPLKNAVAGIAMGLIKEDERFAVLSDILGDEDHLGDMDFKVAGTANGITSLQMDIKITSITKEIMNVALNQAKDGRIHILGEMTKALGNARSDVSDFAPRITTIKVPPQKVREVIGSGGKVIREITEVTGTKIDIEDDGTIKIASADAEATQRAVDWIKGIVAEPEIGVVYTGKVVKIMDFGAFVNFLGTRDGLVHISELSQDRVKKVGDVVNVGDQVKVKCVGFDDRGKIKLSMKQVDQVTGADLSTQAPAEE</sequence>
<reference key="1">
    <citation type="journal article" date="2011" name="Stand. Genomic Sci.">
        <title>Complete genome sequence of Rhodospirillum rubrum type strain (S1).</title>
        <authorList>
            <person name="Munk A.C."/>
            <person name="Copeland A."/>
            <person name="Lucas S."/>
            <person name="Lapidus A."/>
            <person name="Del Rio T.G."/>
            <person name="Barry K."/>
            <person name="Detter J.C."/>
            <person name="Hammon N."/>
            <person name="Israni S."/>
            <person name="Pitluck S."/>
            <person name="Brettin T."/>
            <person name="Bruce D."/>
            <person name="Han C."/>
            <person name="Tapia R."/>
            <person name="Gilna P."/>
            <person name="Schmutz J."/>
            <person name="Larimer F."/>
            <person name="Land M."/>
            <person name="Kyrpides N.C."/>
            <person name="Mavromatis K."/>
            <person name="Richardson P."/>
            <person name="Rohde M."/>
            <person name="Goeker M."/>
            <person name="Klenk H.P."/>
            <person name="Zhang Y."/>
            <person name="Roberts G.P."/>
            <person name="Reslewic S."/>
            <person name="Schwartz D.C."/>
        </authorList>
    </citation>
    <scope>NUCLEOTIDE SEQUENCE [LARGE SCALE GENOMIC DNA]</scope>
    <source>
        <strain>ATCC 11170 / ATH 1.1.1 / DSM 467 / LMG 4362 / NCIMB 8255 / S1</strain>
    </source>
</reference>
<name>PNP_RHORT</name>
<organism>
    <name type="scientific">Rhodospirillum rubrum (strain ATCC 11170 / ATH 1.1.1 / DSM 467 / LMG 4362 / NCIMB 8255 / S1)</name>
    <dbReference type="NCBI Taxonomy" id="269796"/>
    <lineage>
        <taxon>Bacteria</taxon>
        <taxon>Pseudomonadati</taxon>
        <taxon>Pseudomonadota</taxon>
        <taxon>Alphaproteobacteria</taxon>
        <taxon>Rhodospirillales</taxon>
        <taxon>Rhodospirillaceae</taxon>
        <taxon>Rhodospirillum</taxon>
    </lineage>
</organism>
<protein>
    <recommendedName>
        <fullName evidence="1">Polyribonucleotide nucleotidyltransferase</fullName>
        <ecNumber evidence="1">2.7.7.8</ecNumber>
    </recommendedName>
    <alternativeName>
        <fullName evidence="1">Polynucleotide phosphorylase</fullName>
        <shortName evidence="1">PNPase</shortName>
    </alternativeName>
</protein>
<feature type="chain" id="PRO_0000329814" description="Polyribonucleotide nucleotidyltransferase">
    <location>
        <begin position="1"/>
        <end position="708"/>
    </location>
</feature>
<feature type="domain" description="KH" evidence="1">
    <location>
        <begin position="553"/>
        <end position="612"/>
    </location>
</feature>
<feature type="domain" description="S1 motif" evidence="1">
    <location>
        <begin position="622"/>
        <end position="690"/>
    </location>
</feature>
<feature type="binding site" evidence="1">
    <location>
        <position position="486"/>
    </location>
    <ligand>
        <name>Mg(2+)</name>
        <dbReference type="ChEBI" id="CHEBI:18420"/>
    </ligand>
</feature>
<feature type="binding site" evidence="1">
    <location>
        <position position="492"/>
    </location>
    <ligand>
        <name>Mg(2+)</name>
        <dbReference type="ChEBI" id="CHEBI:18420"/>
    </ligand>
</feature>
<dbReference type="EC" id="2.7.7.8" evidence="1"/>
<dbReference type="EMBL" id="CP000230">
    <property type="protein sequence ID" value="ABC24579.1"/>
    <property type="molecule type" value="Genomic_DNA"/>
</dbReference>
<dbReference type="RefSeq" id="WP_011391532.1">
    <property type="nucleotide sequence ID" value="NC_007643.1"/>
</dbReference>
<dbReference type="RefSeq" id="YP_428866.1">
    <property type="nucleotide sequence ID" value="NC_007643.1"/>
</dbReference>
<dbReference type="SMR" id="Q2RMR6"/>
<dbReference type="STRING" id="269796.Rru_A3785"/>
<dbReference type="EnsemblBacteria" id="ABC24579">
    <property type="protein sequence ID" value="ABC24579"/>
    <property type="gene ID" value="Rru_A3785"/>
</dbReference>
<dbReference type="KEGG" id="rru:Rru_A3785"/>
<dbReference type="PATRIC" id="fig|269796.9.peg.3907"/>
<dbReference type="eggNOG" id="COG1185">
    <property type="taxonomic scope" value="Bacteria"/>
</dbReference>
<dbReference type="HOGENOM" id="CLU_004217_2_2_5"/>
<dbReference type="PhylomeDB" id="Q2RMR6"/>
<dbReference type="Proteomes" id="UP000001929">
    <property type="component" value="Chromosome"/>
</dbReference>
<dbReference type="GO" id="GO:0005829">
    <property type="term" value="C:cytosol"/>
    <property type="evidence" value="ECO:0007669"/>
    <property type="project" value="TreeGrafter"/>
</dbReference>
<dbReference type="GO" id="GO:0000175">
    <property type="term" value="F:3'-5'-RNA exonuclease activity"/>
    <property type="evidence" value="ECO:0007669"/>
    <property type="project" value="TreeGrafter"/>
</dbReference>
<dbReference type="GO" id="GO:0000287">
    <property type="term" value="F:magnesium ion binding"/>
    <property type="evidence" value="ECO:0007669"/>
    <property type="project" value="UniProtKB-UniRule"/>
</dbReference>
<dbReference type="GO" id="GO:0004654">
    <property type="term" value="F:polyribonucleotide nucleotidyltransferase activity"/>
    <property type="evidence" value="ECO:0007669"/>
    <property type="project" value="UniProtKB-UniRule"/>
</dbReference>
<dbReference type="GO" id="GO:0003723">
    <property type="term" value="F:RNA binding"/>
    <property type="evidence" value="ECO:0007669"/>
    <property type="project" value="UniProtKB-UniRule"/>
</dbReference>
<dbReference type="GO" id="GO:0006402">
    <property type="term" value="P:mRNA catabolic process"/>
    <property type="evidence" value="ECO:0007669"/>
    <property type="project" value="UniProtKB-UniRule"/>
</dbReference>
<dbReference type="GO" id="GO:0006396">
    <property type="term" value="P:RNA processing"/>
    <property type="evidence" value="ECO:0007669"/>
    <property type="project" value="InterPro"/>
</dbReference>
<dbReference type="CDD" id="cd02393">
    <property type="entry name" value="KH-I_PNPase"/>
    <property type="match status" value="1"/>
</dbReference>
<dbReference type="CDD" id="cd11363">
    <property type="entry name" value="RNase_PH_PNPase_1"/>
    <property type="match status" value="1"/>
</dbReference>
<dbReference type="CDD" id="cd11364">
    <property type="entry name" value="RNase_PH_PNPase_2"/>
    <property type="match status" value="1"/>
</dbReference>
<dbReference type="CDD" id="cd04472">
    <property type="entry name" value="S1_PNPase"/>
    <property type="match status" value="1"/>
</dbReference>
<dbReference type="FunFam" id="2.40.50.140:FF:000107">
    <property type="entry name" value="Polyribonucleotide nucleotidyltransferase"/>
    <property type="match status" value="1"/>
</dbReference>
<dbReference type="FunFam" id="3.30.1370.10:FF:000001">
    <property type="entry name" value="Polyribonucleotide nucleotidyltransferase"/>
    <property type="match status" value="1"/>
</dbReference>
<dbReference type="FunFam" id="3.30.230.70:FF:000001">
    <property type="entry name" value="Polyribonucleotide nucleotidyltransferase"/>
    <property type="match status" value="1"/>
</dbReference>
<dbReference type="FunFam" id="3.30.230.70:FF:000002">
    <property type="entry name" value="Polyribonucleotide nucleotidyltransferase"/>
    <property type="match status" value="1"/>
</dbReference>
<dbReference type="Gene3D" id="3.30.230.70">
    <property type="entry name" value="GHMP Kinase, N-terminal domain"/>
    <property type="match status" value="2"/>
</dbReference>
<dbReference type="Gene3D" id="3.30.1370.10">
    <property type="entry name" value="K Homology domain, type 1"/>
    <property type="match status" value="1"/>
</dbReference>
<dbReference type="Gene3D" id="2.40.50.140">
    <property type="entry name" value="Nucleic acid-binding proteins"/>
    <property type="match status" value="1"/>
</dbReference>
<dbReference type="HAMAP" id="MF_01595">
    <property type="entry name" value="PNPase"/>
    <property type="match status" value="1"/>
</dbReference>
<dbReference type="InterPro" id="IPR001247">
    <property type="entry name" value="ExoRNase_PH_dom1"/>
</dbReference>
<dbReference type="InterPro" id="IPR015847">
    <property type="entry name" value="ExoRNase_PH_dom2"/>
</dbReference>
<dbReference type="InterPro" id="IPR036345">
    <property type="entry name" value="ExoRNase_PH_dom2_sf"/>
</dbReference>
<dbReference type="InterPro" id="IPR004087">
    <property type="entry name" value="KH_dom"/>
</dbReference>
<dbReference type="InterPro" id="IPR004088">
    <property type="entry name" value="KH_dom_type_1"/>
</dbReference>
<dbReference type="InterPro" id="IPR036612">
    <property type="entry name" value="KH_dom_type_1_sf"/>
</dbReference>
<dbReference type="InterPro" id="IPR012340">
    <property type="entry name" value="NA-bd_OB-fold"/>
</dbReference>
<dbReference type="InterPro" id="IPR012162">
    <property type="entry name" value="PNPase"/>
</dbReference>
<dbReference type="InterPro" id="IPR027408">
    <property type="entry name" value="PNPase/RNase_PH_dom_sf"/>
</dbReference>
<dbReference type="InterPro" id="IPR015848">
    <property type="entry name" value="PNPase_PH_RNA-bd_bac/org-type"/>
</dbReference>
<dbReference type="InterPro" id="IPR036456">
    <property type="entry name" value="PNPase_PH_RNA-bd_sf"/>
</dbReference>
<dbReference type="InterPro" id="IPR020568">
    <property type="entry name" value="Ribosomal_Su5_D2-typ_SF"/>
</dbReference>
<dbReference type="InterPro" id="IPR003029">
    <property type="entry name" value="S1_domain"/>
</dbReference>
<dbReference type="NCBIfam" id="TIGR03591">
    <property type="entry name" value="polynuc_phos"/>
    <property type="match status" value="1"/>
</dbReference>
<dbReference type="NCBIfam" id="NF008805">
    <property type="entry name" value="PRK11824.1"/>
    <property type="match status" value="1"/>
</dbReference>
<dbReference type="PANTHER" id="PTHR11252">
    <property type="entry name" value="POLYRIBONUCLEOTIDE NUCLEOTIDYLTRANSFERASE"/>
    <property type="match status" value="1"/>
</dbReference>
<dbReference type="PANTHER" id="PTHR11252:SF0">
    <property type="entry name" value="POLYRIBONUCLEOTIDE NUCLEOTIDYLTRANSFERASE 1, MITOCHONDRIAL"/>
    <property type="match status" value="1"/>
</dbReference>
<dbReference type="Pfam" id="PF00013">
    <property type="entry name" value="KH_1"/>
    <property type="match status" value="1"/>
</dbReference>
<dbReference type="Pfam" id="PF03726">
    <property type="entry name" value="PNPase"/>
    <property type="match status" value="1"/>
</dbReference>
<dbReference type="Pfam" id="PF01138">
    <property type="entry name" value="RNase_PH"/>
    <property type="match status" value="2"/>
</dbReference>
<dbReference type="Pfam" id="PF03725">
    <property type="entry name" value="RNase_PH_C"/>
    <property type="match status" value="2"/>
</dbReference>
<dbReference type="Pfam" id="PF00575">
    <property type="entry name" value="S1"/>
    <property type="match status" value="1"/>
</dbReference>
<dbReference type="PIRSF" id="PIRSF005499">
    <property type="entry name" value="PNPase"/>
    <property type="match status" value="1"/>
</dbReference>
<dbReference type="SMART" id="SM00322">
    <property type="entry name" value="KH"/>
    <property type="match status" value="1"/>
</dbReference>
<dbReference type="SMART" id="SM00316">
    <property type="entry name" value="S1"/>
    <property type="match status" value="1"/>
</dbReference>
<dbReference type="SUPFAM" id="SSF54791">
    <property type="entry name" value="Eukaryotic type KH-domain (KH-domain type I)"/>
    <property type="match status" value="1"/>
</dbReference>
<dbReference type="SUPFAM" id="SSF50249">
    <property type="entry name" value="Nucleic acid-binding proteins"/>
    <property type="match status" value="1"/>
</dbReference>
<dbReference type="SUPFAM" id="SSF46915">
    <property type="entry name" value="Polynucleotide phosphorylase/guanosine pentaphosphate synthase (PNPase/GPSI), domain 3"/>
    <property type="match status" value="1"/>
</dbReference>
<dbReference type="SUPFAM" id="SSF55666">
    <property type="entry name" value="Ribonuclease PH domain 2-like"/>
    <property type="match status" value="2"/>
</dbReference>
<dbReference type="SUPFAM" id="SSF54211">
    <property type="entry name" value="Ribosomal protein S5 domain 2-like"/>
    <property type="match status" value="2"/>
</dbReference>
<dbReference type="PROSITE" id="PS50084">
    <property type="entry name" value="KH_TYPE_1"/>
    <property type="match status" value="1"/>
</dbReference>
<dbReference type="PROSITE" id="PS50126">
    <property type="entry name" value="S1"/>
    <property type="match status" value="1"/>
</dbReference>
<gene>
    <name evidence="1" type="primary">pnp</name>
    <name type="ordered locus">Rru_A3785</name>
</gene>
<proteinExistence type="inferred from homology"/>
<comment type="function">
    <text evidence="1">Involved in mRNA degradation. Catalyzes the phosphorolysis of single-stranded polyribonucleotides processively in the 3'- to 5'-direction.</text>
</comment>
<comment type="catalytic activity">
    <reaction evidence="1">
        <text>RNA(n+1) + phosphate = RNA(n) + a ribonucleoside 5'-diphosphate</text>
        <dbReference type="Rhea" id="RHEA:22096"/>
        <dbReference type="Rhea" id="RHEA-COMP:14527"/>
        <dbReference type="Rhea" id="RHEA-COMP:17342"/>
        <dbReference type="ChEBI" id="CHEBI:43474"/>
        <dbReference type="ChEBI" id="CHEBI:57930"/>
        <dbReference type="ChEBI" id="CHEBI:140395"/>
        <dbReference type="EC" id="2.7.7.8"/>
    </reaction>
</comment>
<comment type="cofactor">
    <cofactor evidence="1">
        <name>Mg(2+)</name>
        <dbReference type="ChEBI" id="CHEBI:18420"/>
    </cofactor>
</comment>
<comment type="subcellular location">
    <subcellularLocation>
        <location evidence="1">Cytoplasm</location>
    </subcellularLocation>
</comment>
<comment type="similarity">
    <text evidence="1">Belongs to the polyribonucleotide nucleotidyltransferase family.</text>
</comment>
<accession>Q2RMR6</accession>
<keyword id="KW-0963">Cytoplasm</keyword>
<keyword id="KW-0460">Magnesium</keyword>
<keyword id="KW-0479">Metal-binding</keyword>
<keyword id="KW-0548">Nucleotidyltransferase</keyword>
<keyword id="KW-1185">Reference proteome</keyword>
<keyword id="KW-0694">RNA-binding</keyword>
<keyword id="KW-0808">Transferase</keyword>